<sequence length="141" mass="15117">MAKKVVAEVKLQLPAGKATPAPPVGPALGQRGVNIMEFCKRFNAETADKAGMILPVIITVYEDRSFSFVVKTPPASFLLKRAAGLEKGSGEPKRKNVGKVTRKQLEEIAKIKMPDITANDLEAAVKIVEGTAKSMGIEIVD</sequence>
<dbReference type="EMBL" id="CP000812">
    <property type="protein sequence ID" value="ABV33040.1"/>
    <property type="molecule type" value="Genomic_DNA"/>
</dbReference>
<dbReference type="RefSeq" id="WP_012002521.1">
    <property type="nucleotide sequence ID" value="NZ_BSDV01000001.1"/>
</dbReference>
<dbReference type="SMR" id="A8F4F6"/>
<dbReference type="STRING" id="416591.Tlet_0473"/>
<dbReference type="KEGG" id="tle:Tlet_0473"/>
<dbReference type="eggNOG" id="COG0080">
    <property type="taxonomic scope" value="Bacteria"/>
</dbReference>
<dbReference type="HOGENOM" id="CLU_074237_2_0_0"/>
<dbReference type="OrthoDB" id="9802408at2"/>
<dbReference type="Proteomes" id="UP000002016">
    <property type="component" value="Chromosome"/>
</dbReference>
<dbReference type="GO" id="GO:0022625">
    <property type="term" value="C:cytosolic large ribosomal subunit"/>
    <property type="evidence" value="ECO:0007669"/>
    <property type="project" value="TreeGrafter"/>
</dbReference>
<dbReference type="GO" id="GO:0070180">
    <property type="term" value="F:large ribosomal subunit rRNA binding"/>
    <property type="evidence" value="ECO:0007669"/>
    <property type="project" value="UniProtKB-UniRule"/>
</dbReference>
<dbReference type="GO" id="GO:0003735">
    <property type="term" value="F:structural constituent of ribosome"/>
    <property type="evidence" value="ECO:0007669"/>
    <property type="project" value="InterPro"/>
</dbReference>
<dbReference type="GO" id="GO:0006412">
    <property type="term" value="P:translation"/>
    <property type="evidence" value="ECO:0007669"/>
    <property type="project" value="UniProtKB-UniRule"/>
</dbReference>
<dbReference type="CDD" id="cd00349">
    <property type="entry name" value="Ribosomal_L11"/>
    <property type="match status" value="1"/>
</dbReference>
<dbReference type="FunFam" id="1.10.10.250:FF:000001">
    <property type="entry name" value="50S ribosomal protein L11"/>
    <property type="match status" value="1"/>
</dbReference>
<dbReference type="FunFam" id="3.30.1550.10:FF:000001">
    <property type="entry name" value="50S ribosomal protein L11"/>
    <property type="match status" value="1"/>
</dbReference>
<dbReference type="Gene3D" id="1.10.10.250">
    <property type="entry name" value="Ribosomal protein L11, C-terminal domain"/>
    <property type="match status" value="1"/>
</dbReference>
<dbReference type="Gene3D" id="3.30.1550.10">
    <property type="entry name" value="Ribosomal protein L11/L12, N-terminal domain"/>
    <property type="match status" value="1"/>
</dbReference>
<dbReference type="HAMAP" id="MF_00736">
    <property type="entry name" value="Ribosomal_uL11"/>
    <property type="match status" value="1"/>
</dbReference>
<dbReference type="InterPro" id="IPR000911">
    <property type="entry name" value="Ribosomal_uL11"/>
</dbReference>
<dbReference type="InterPro" id="IPR006519">
    <property type="entry name" value="Ribosomal_uL11_bac-typ"/>
</dbReference>
<dbReference type="InterPro" id="IPR020783">
    <property type="entry name" value="Ribosomal_uL11_C"/>
</dbReference>
<dbReference type="InterPro" id="IPR036769">
    <property type="entry name" value="Ribosomal_uL11_C_sf"/>
</dbReference>
<dbReference type="InterPro" id="IPR020785">
    <property type="entry name" value="Ribosomal_uL11_CS"/>
</dbReference>
<dbReference type="InterPro" id="IPR020784">
    <property type="entry name" value="Ribosomal_uL11_N"/>
</dbReference>
<dbReference type="InterPro" id="IPR036796">
    <property type="entry name" value="Ribosomal_uL11_N_sf"/>
</dbReference>
<dbReference type="NCBIfam" id="TIGR01632">
    <property type="entry name" value="L11_bact"/>
    <property type="match status" value="1"/>
</dbReference>
<dbReference type="PANTHER" id="PTHR11661">
    <property type="entry name" value="60S RIBOSOMAL PROTEIN L12"/>
    <property type="match status" value="1"/>
</dbReference>
<dbReference type="PANTHER" id="PTHR11661:SF1">
    <property type="entry name" value="LARGE RIBOSOMAL SUBUNIT PROTEIN UL11M"/>
    <property type="match status" value="1"/>
</dbReference>
<dbReference type="Pfam" id="PF00298">
    <property type="entry name" value="Ribosomal_L11"/>
    <property type="match status" value="1"/>
</dbReference>
<dbReference type="Pfam" id="PF03946">
    <property type="entry name" value="Ribosomal_L11_N"/>
    <property type="match status" value="1"/>
</dbReference>
<dbReference type="SMART" id="SM00649">
    <property type="entry name" value="RL11"/>
    <property type="match status" value="1"/>
</dbReference>
<dbReference type="SUPFAM" id="SSF54747">
    <property type="entry name" value="Ribosomal L11/L12e N-terminal domain"/>
    <property type="match status" value="1"/>
</dbReference>
<dbReference type="SUPFAM" id="SSF46906">
    <property type="entry name" value="Ribosomal protein L11, C-terminal domain"/>
    <property type="match status" value="1"/>
</dbReference>
<dbReference type="PROSITE" id="PS00359">
    <property type="entry name" value="RIBOSOMAL_L11"/>
    <property type="match status" value="1"/>
</dbReference>
<accession>A8F4F6</accession>
<organism>
    <name type="scientific">Pseudothermotoga lettingae (strain ATCC BAA-301 / DSM 14385 / NBRC 107922 / TMO)</name>
    <name type="common">Thermotoga lettingae</name>
    <dbReference type="NCBI Taxonomy" id="416591"/>
    <lineage>
        <taxon>Bacteria</taxon>
        <taxon>Thermotogati</taxon>
        <taxon>Thermotogota</taxon>
        <taxon>Thermotogae</taxon>
        <taxon>Thermotogales</taxon>
        <taxon>Thermotogaceae</taxon>
        <taxon>Pseudothermotoga</taxon>
    </lineage>
</organism>
<evidence type="ECO:0000255" key="1">
    <source>
        <dbReference type="HAMAP-Rule" id="MF_00736"/>
    </source>
</evidence>
<evidence type="ECO:0000305" key="2"/>
<feature type="chain" id="PRO_1000062141" description="Large ribosomal subunit protein uL11">
    <location>
        <begin position="1"/>
        <end position="141"/>
    </location>
</feature>
<protein>
    <recommendedName>
        <fullName evidence="1">Large ribosomal subunit protein uL11</fullName>
    </recommendedName>
    <alternativeName>
        <fullName evidence="2">50S ribosomal protein L11</fullName>
    </alternativeName>
</protein>
<comment type="function">
    <text evidence="1">Forms part of the ribosomal stalk which helps the ribosome interact with GTP-bound translation factors.</text>
</comment>
<comment type="subunit">
    <text evidence="1">Part of the ribosomal stalk of the 50S ribosomal subunit. Interacts with L10 and the large rRNA to form the base of the stalk. L10 forms an elongated spine to which L12 dimers bind in a sequential fashion forming a multimeric L10(L12)X complex.</text>
</comment>
<comment type="PTM">
    <text evidence="1">One or more lysine residues are methylated.</text>
</comment>
<comment type="similarity">
    <text evidence="1">Belongs to the universal ribosomal protein uL11 family.</text>
</comment>
<reference key="1">
    <citation type="submission" date="2007-08" db="EMBL/GenBank/DDBJ databases">
        <title>Complete sequence of Thermotoga lettingae TMO.</title>
        <authorList>
            <consortium name="US DOE Joint Genome Institute"/>
            <person name="Copeland A."/>
            <person name="Lucas S."/>
            <person name="Lapidus A."/>
            <person name="Barry K."/>
            <person name="Glavina del Rio T."/>
            <person name="Dalin E."/>
            <person name="Tice H."/>
            <person name="Pitluck S."/>
            <person name="Foster B."/>
            <person name="Bruce D."/>
            <person name="Schmutz J."/>
            <person name="Larimer F."/>
            <person name="Land M."/>
            <person name="Hauser L."/>
            <person name="Kyrpides N."/>
            <person name="Mikhailova N."/>
            <person name="Nelson K."/>
            <person name="Gogarten J.P."/>
            <person name="Noll K."/>
            <person name="Richardson P."/>
        </authorList>
    </citation>
    <scope>NUCLEOTIDE SEQUENCE [LARGE SCALE GENOMIC DNA]</scope>
    <source>
        <strain>ATCC BAA-301 / DSM 14385 / NBRC 107922 / TMO</strain>
    </source>
</reference>
<gene>
    <name evidence="1" type="primary">rplK</name>
    <name type="ordered locus">Tlet_0473</name>
</gene>
<keyword id="KW-0488">Methylation</keyword>
<keyword id="KW-1185">Reference proteome</keyword>
<keyword id="KW-0687">Ribonucleoprotein</keyword>
<keyword id="KW-0689">Ribosomal protein</keyword>
<keyword id="KW-0694">RNA-binding</keyword>
<keyword id="KW-0699">rRNA-binding</keyword>
<proteinExistence type="inferred from homology"/>
<name>RL11_PSELT</name>